<name>LOLA3_DROME</name>
<evidence type="ECO:0000255" key="1">
    <source>
        <dbReference type="PROSITE-ProRule" id="PRU00037"/>
    </source>
</evidence>
<evidence type="ECO:0000255" key="2">
    <source>
        <dbReference type="PROSITE-ProRule" id="PRU00042"/>
    </source>
</evidence>
<evidence type="ECO:0000256" key="3">
    <source>
        <dbReference type="SAM" id="MobiDB-lite"/>
    </source>
</evidence>
<evidence type="ECO:0000269" key="4">
    <source>
    </source>
</evidence>
<evidence type="ECO:0000269" key="5">
    <source>
    </source>
</evidence>
<evidence type="ECO:0000269" key="6">
    <source>
    </source>
</evidence>
<evidence type="ECO:0000269" key="7">
    <source>
    </source>
</evidence>
<evidence type="ECO:0000269" key="8">
    <source>
    </source>
</evidence>
<evidence type="ECO:0000269" key="9">
    <source>
    </source>
</evidence>
<evidence type="ECO:0000269" key="10">
    <source>
    </source>
</evidence>
<evidence type="ECO:0000303" key="11">
    <source>
    </source>
</evidence>
<evidence type="ECO:0000303" key="12">
    <source>
    </source>
</evidence>
<evidence type="ECO:0000303" key="13">
    <source>
    </source>
</evidence>
<evidence type="ECO:0000303" key="14">
    <source>
    </source>
</evidence>
<evidence type="ECO:0000303" key="15">
    <source ref="5"/>
</evidence>
<evidence type="ECO:0000305" key="16"/>
<evidence type="ECO:0000312" key="17">
    <source>
        <dbReference type="EMBL" id="AAL13815.1"/>
    </source>
</evidence>
<evidence type="ECO:0000312" key="18">
    <source>
        <dbReference type="EMBL" id="AAM68765.1"/>
    </source>
</evidence>
<evidence type="ECO:0000312" key="19">
    <source>
        <dbReference type="EMBL" id="AAO49162.1"/>
    </source>
</evidence>
<evidence type="ECO:0000312" key="20">
    <source>
        <dbReference type="EMBL" id="BAC67588.1"/>
    </source>
</evidence>
<evidence type="ECO:0000312" key="21">
    <source>
        <dbReference type="FlyBase" id="FBgn0283521"/>
    </source>
</evidence>
<proteinExistence type="evidence at protein level"/>
<gene>
    <name evidence="21" type="primary">lola</name>
    <name evidence="21" type="ORF">CG12052</name>
</gene>
<organism>
    <name type="scientific">Drosophila melanogaster</name>
    <name type="common">Fruit fly</name>
    <dbReference type="NCBI Taxonomy" id="7227"/>
    <lineage>
        <taxon>Eukaryota</taxon>
        <taxon>Metazoa</taxon>
        <taxon>Ecdysozoa</taxon>
        <taxon>Arthropoda</taxon>
        <taxon>Hexapoda</taxon>
        <taxon>Insecta</taxon>
        <taxon>Pterygota</taxon>
        <taxon>Neoptera</taxon>
        <taxon>Endopterygota</taxon>
        <taxon>Diptera</taxon>
        <taxon>Brachycera</taxon>
        <taxon>Muscomorpha</taxon>
        <taxon>Ephydroidea</taxon>
        <taxon>Drosophilidae</taxon>
        <taxon>Drosophila</taxon>
        <taxon>Sophophora</taxon>
    </lineage>
</organism>
<comment type="function">
    <text evidence="5 10">Putative transcription factor required for axon growth and guidance in the central and peripheral nervous systems. Repels CNS axons away from the midline by promoting the expression of the midline repellent sli and its receptor robo.</text>
</comment>
<comment type="subunit">
    <text evidence="7">Isoform D interacts with JIL-1.</text>
</comment>
<comment type="subcellular location">
    <subcellularLocation>
        <location evidence="7 10">Nucleus</location>
    </subcellularLocation>
</comment>
<comment type="alternative products">
    <event type="alternative splicing"/>
    <isoform>
        <id>Q7KQZ4-1</id>
        <name>B</name>
        <name evidence="8">C</name>
        <name evidence="13">Ohsako-L</name>
        <sequence type="displayed"/>
    </isoform>
    <isoform>
        <id>Q7KQZ4-2</id>
        <name evidence="8">A</name>
        <name evidence="13">Ohsako-D</name>
        <sequence type="described" ref="VSP_051795 VSP_051798"/>
    </isoform>
    <isoform>
        <id>Q7KQZ4-3</id>
        <name evidence="11">D</name>
        <name>E</name>
        <name evidence="13">Ohsako-F</name>
        <sequence type="described" ref="VSP_051796 VSP_051799"/>
    </isoform>
    <isoform>
        <id>Q7KQZ4-4</id>
        <name evidence="8">L</name>
        <name evidence="13">Ohsako-C</name>
        <sequence type="described" ref="VSP_051794 VSP_051797"/>
    </isoform>
    <isoform>
        <id>Q867Z4-2</id>
        <name evidence="8">F</name>
        <name evidence="13">Ohsako-I</name>
        <sequence type="external"/>
    </isoform>
    <isoform>
        <id>P42283-1</id>
        <name evidence="8">G</name>
        <name evidence="14">Long</name>
        <name evidence="13">Ohsako-T</name>
        <name>R</name>
        <sequence type="external"/>
    </isoform>
    <isoform>
        <id>P42284-3</id>
        <name evidence="8">H</name>
        <name evidence="13">Ohsako-M</name>
        <sequence type="external"/>
    </isoform>
    <isoform>
        <id>Q867Z4-1</id>
        <name evidence="8">I</name>
        <name evidence="13">Ohsako-K</name>
        <sequence type="external"/>
    </isoform>
    <isoform>
        <id>Q9V5M6-2</id>
        <name evidence="8">J</name>
        <name evidence="13">Ohsako-O</name>
        <sequence type="external"/>
    </isoform>
    <isoform>
        <id>Q867Z4-3</id>
        <name evidence="8">K</name>
        <name evidence="13">Ohsako-H</name>
        <sequence type="external"/>
    </isoform>
    <isoform>
        <id>P42284-1</id>
        <name evidence="8">M</name>
        <name evidence="14">Short</name>
        <name evidence="13">Ohsako-A</name>
        <sequence type="external"/>
    </isoform>
    <isoform>
        <id>Q9V5M3-1</id>
        <name evidence="11">N</name>
        <sequence type="external"/>
    </isoform>
    <isoform>
        <id>Q9V5M3-2</id>
        <name evidence="8">O</name>
        <name evidence="13">Ohsako-P</name>
        <sequence type="external"/>
    </isoform>
    <isoform>
        <id>Q9V5M6-1</id>
        <name evidence="8">P</name>
        <name evidence="13">Ohsako-N</name>
        <sequence type="external"/>
    </isoform>
    <isoform>
        <id>Q9V5M6-3</id>
        <name evidence="8">Q</name>
        <name evidence="13">Ohsako-B</name>
        <sequence type="external"/>
    </isoform>
    <isoform>
        <id>Q9V5M6-4</id>
        <name evidence="8">S</name>
        <sequence type="external"/>
    </isoform>
    <isoform>
        <id>Q867Z4-5</id>
        <name evidence="8">T</name>
        <name evidence="11">U</name>
        <name evidence="13">Ohsako-J</name>
        <sequence type="external"/>
    </isoform>
    <isoform>
        <id>P42284-2</id>
        <name evidence="8">V</name>
        <name evidence="13">Ohsako-G</name>
        <sequence type="external"/>
    </isoform>
    <isoform>
        <id>Q9V5M3-3</id>
        <name evidence="8">W</name>
        <name evidence="13">Ohsako-Q</name>
        <sequence type="external"/>
    </isoform>
    <isoform>
        <id>Q9V5M3-4</id>
        <name evidence="8">X</name>
        <name evidence="13">Ohsako-S</name>
        <sequence type="external"/>
    </isoform>
    <isoform>
        <id>Q9V5M3-5</id>
        <name evidence="8">Y</name>
        <name evidence="13">Ohsako-R</name>
        <sequence type="external"/>
    </isoform>
    <isoform>
        <id>Q9V5M6-5</id>
        <name>Z</name>
        <name>Ohsako-E</name>
        <sequence type="external"/>
    </isoform>
    <text>Some isoforms may be generated by alternative trans-splicing of exons sequentially encoded by the same DNA strand.</text>
</comment>
<comment type="tissue specificity">
    <text evidence="9">By stage 11, isoform B is expressed throughout the mesoderm, whereas isoform A, isoform D and isoform L are expressed throughout the ectoderm. Expression becomes restricted during later stages; starting from stage 14 to 16, isoform B is expressed in muscle. Isoform A, isoform D, and at low levels isoform B, are expressed in the CNS. Expression is also seen in specific types of cells in the embryo; isoform A and isoform L are expressed in a dynamic pattern in the ventral neurogenic region starting at stage 7. Isoform L is expressed around the tracheal pits at stage 11.</text>
</comment>
<comment type="developmental stage">
    <text evidence="7 9 10">Expressed both maternally and zygotically. At least one isoform is present at each developmental stage. Isoform D is restricted to early embryogenesis (at protein level).</text>
</comment>
<comment type="miscellaneous">
    <molecule>Isoform B</molecule>
    <text>C-terminal exons may be joined by a trans-splicing event. The exons are coded by the same DNA strand.</text>
</comment>
<feature type="chain" id="PRO_0000047074" description="Longitudinals lacking protein, isoforms A/B/D/L">
    <location>
        <begin position="1"/>
        <end position="787"/>
    </location>
</feature>
<feature type="domain" description="BTB" evidence="1">
    <location>
        <begin position="32"/>
        <end position="97"/>
    </location>
</feature>
<feature type="zinc finger region" description="C2H2-type 1; degenerate" evidence="2">
    <location>
        <begin position="685"/>
        <end position="707"/>
    </location>
</feature>
<feature type="zinc finger region" description="C2H2-type 2" evidence="2">
    <location>
        <begin position="714"/>
        <end position="737"/>
    </location>
</feature>
<feature type="region of interest" description="Disordered" evidence="3">
    <location>
        <begin position="115"/>
        <end position="200"/>
    </location>
</feature>
<feature type="region of interest" description="Disordered" evidence="3">
    <location>
        <begin position="228"/>
        <end position="340"/>
    </location>
</feature>
<feature type="region of interest" description="Disordered" evidence="3">
    <location>
        <begin position="506"/>
        <end position="560"/>
    </location>
</feature>
<feature type="region of interest" description="Disordered" evidence="3">
    <location>
        <begin position="653"/>
        <end position="677"/>
    </location>
</feature>
<feature type="compositionally biased region" description="Low complexity" evidence="3">
    <location>
        <begin position="162"/>
        <end position="175"/>
    </location>
</feature>
<feature type="compositionally biased region" description="Low complexity" evidence="3">
    <location>
        <begin position="228"/>
        <end position="251"/>
    </location>
</feature>
<feature type="compositionally biased region" description="Low complexity" evidence="3">
    <location>
        <begin position="263"/>
        <end position="293"/>
    </location>
</feature>
<feature type="compositionally biased region" description="Low complexity" evidence="3">
    <location>
        <begin position="329"/>
        <end position="340"/>
    </location>
</feature>
<feature type="compositionally biased region" description="Low complexity" evidence="3">
    <location>
        <begin position="537"/>
        <end position="560"/>
    </location>
</feature>
<feature type="compositionally biased region" description="Low complexity" evidence="3">
    <location>
        <begin position="659"/>
        <end position="668"/>
    </location>
</feature>
<feature type="splice variant" id="VSP_051796" description="In isoform D." evidence="12 13">
    <original>DLSITRIAGLTWNEWNARLAMPLVTLREGVQPLVFPTDLSVDKQQGAAGLTAKDVNVSGRKTPTDGGGCKSEPRAASTPARTHSSSNHSSNGNGSGKPTKTSSGGKLNHLTEEEATALMLKAVAEKQAAAAAGTELSFGEDQASSGNGNSSDYPATLSGAVTFADVGGPAGLCHINILNSISAMNNLISGSTAAGVGITTGSGQSPSNSGHNNSAGGGSSVLGGADNGAGHPCPVCGRVYKLKSSLRNHQKWECGKEPQFQCPFCVYRAKQKMHIGRHMERMHKEKFKLEDVKN</original>
    <variation>DLKYDYKHSIFGSDDADQDQYKERFHCAVCNKSYLRKRHLQRHMRDECIGIPPRFNCEFCSSRFRRKYHMVRHLVSKHGIPPAIAQMTTGSGSRSSISGSLDLKSGGGLAGLQQMGGGGAGGGGSTGDCGASVGSAGSHNGCESPIPENLSLRKENYENENLSGSRCTSPLPPHIMPIPTYGLTGAITAISAAAAVVEEQAAAAAAAAAIAEAQAKNNNESGGGRSEVDDEDETLAAQAEAVAALGIKPEPVTPSKVQHLMNEEWNMKLGLQIISNSLLKERLMNTMPFAYNNN</variation>
    <location>
        <begin position="455"/>
        <end position="748"/>
    </location>
</feature>
<feature type="splice variant" id="VSP_051795" description="In isoform A." evidence="13 15">
    <original>DLSITRIAGLTWNEWNARLAMPLVTLREGVQPLVFPTDLSVDKQQGAAGLTAKDVNVSGRKTPTDGGGCKSEPRAASTPARTHSSSNHSSNGNGSGKPTKTSSGGKLNHLTEEEATALMLKAVAEKQAAAAAGTELSFGEDQASSGNGNSSDYPATLSGAVTFADVGGPAGLCHINILNSISAMNNLISGSTAAGVGITTGSGQSPSNSGHNNSAGGGSSVLGGADNGAGHPCPVCGRVYKLKSSLRNHQKW</original>
    <variation>GLQLIDDSSSSQQNHLNGSKLELMDGSSDDYHQGSGSLHHFHAPQFDHFQGLLAGGNSVVGGAGNGGQEESFTCPQCYRTYRRHGTLRRHLRQECGKGKSMVCSVCGHRTKRADHLRQHVRKKHPEIAMRSLFKRQQRAAAAAASAVEGEDQKPETEIVDLVDMLDDGSVAAADEDHQHAYLVEDDDEDELPQHQQSQLTTEESTTSNYYRQQLRQQALLQQALQQVAAAAAVVASGNSTTSTTELLNGEGL</variation>
    <location>
        <begin position="455"/>
        <end position="706"/>
    </location>
</feature>
<feature type="splice variant" id="VSP_051794" description="In isoform L." evidence="13">
    <original>DLSITRIAGLTWNEWNARLAMPLVTLREGVQPLVFPTDLSVDKQQGAAGLTAKDVNVSGRKTPTDGGGCKSEPRAASTPARTHSSSNHSSNGNGSGKPTKTSSGGKLNHLTEEEATALMLKAVAEKQAAAAAGTELSFGEDQASSGNGNSSDYP</original>
    <variation>GLLELSLNQMFYYDSEMPPPPIPPPVVVESPPASPPLAVVTPVVQLRRGKLRSRRRKAANSSNSTTKKSIPPPTVRSSSAANLARNADMRDDGKLQCPQCPNAYTRLSALKRHLEFECGMLENFRCQVCDAGFKRKDSLNRHCKVKKHNTKYLF</variation>
    <location>
        <begin position="455"/>
        <end position="608"/>
    </location>
</feature>
<feature type="splice variant" id="VSP_051797" description="In isoform L." evidence="13">
    <location>
        <begin position="609"/>
        <end position="787"/>
    </location>
</feature>
<feature type="splice variant" id="VSP_051798" description="In isoform A." evidence="13 15">
    <location>
        <begin position="707"/>
        <end position="787"/>
    </location>
</feature>
<feature type="splice variant" id="VSP_051799" description="In isoform D." evidence="12 13">
    <location>
        <begin position="749"/>
        <end position="787"/>
    </location>
</feature>
<feature type="mutagenesis site" description="In ORE120; defective in embryonic axon guidance." evidence="5">
    <original>A</original>
    <variation>V</variation>
    <location>
        <position position="107"/>
    </location>
</feature>
<feature type="mutagenesis site" description="In ORE119; defective in embryonic axon guidance." evidence="9">
    <original>P</original>
    <variation>L</variation>
    <location>
        <position position="712"/>
    </location>
</feature>
<feature type="sequence conflict" description="In Ref. 1; BAC67588/BAC67608/BAC67628/BAC67648." evidence="16" ref="1">
    <location>
        <position position="520"/>
    </location>
</feature>
<feature type="sequence conflict" description="In Ref. 1; BAC67588/BAC67608/BAC67628/BAC67648." evidence="16" ref="1">
    <original>T</original>
    <variation>S</variation>
    <location>
        <position position="653"/>
    </location>
</feature>
<feature type="sequence conflict" description="In Ref. 1; BAC67580/BAC67600/BAC67620/BAC67640." evidence="16" ref="1">
    <original>N</original>
    <variation>S</variation>
    <location sequence="Q7KQZ4-2">
        <position position="519"/>
    </location>
</feature>
<feature type="sequence conflict" description="In Ref. 1; BAC67580/BAC67600/BAC67620/BAC67640." evidence="16" ref="1">
    <original>E</original>
    <variation>D</variation>
    <location sequence="Q7KQZ4-2">
        <position position="611"/>
    </location>
</feature>
<feature type="sequence conflict" description="In Ref. 1; BAC67580/BAC67600/BAC67620/BAC67640." evidence="16" ref="1">
    <original>T</original>
    <variation>A</variation>
    <location sequence="Q7KQZ4-2">
        <position position="654"/>
    </location>
</feature>
<reference evidence="16 20" key="1">
    <citation type="journal article" date="2003" name="Gene">
        <title>Drosophila lola encodes a family of BTB-transcription regulators with highly variable C-terminal domains containing zinc finger motifs.</title>
        <authorList>
            <person name="Ohsako T."/>
            <person name="Horiuchi T."/>
            <person name="Matsuo T."/>
            <person name="Komaya S."/>
            <person name="Aigaki T."/>
        </authorList>
    </citation>
    <scope>NUCLEOTIDE SEQUENCE [MRNA] (ISOFORMS A; B; D AND L)</scope>
    <source>
        <strain evidence="20">Canton-S</strain>
        <tissue evidence="8">Embryo</tissue>
        <tissue evidence="8">Larva</tissue>
    </source>
</reference>
<reference evidence="18" key="2">
    <citation type="journal article" date="2000" name="Science">
        <title>The genome sequence of Drosophila melanogaster.</title>
        <authorList>
            <person name="Adams M.D."/>
            <person name="Celniker S.E."/>
            <person name="Holt R.A."/>
            <person name="Evans C.A."/>
            <person name="Gocayne J.D."/>
            <person name="Amanatides P.G."/>
            <person name="Scherer S.E."/>
            <person name="Li P.W."/>
            <person name="Hoskins R.A."/>
            <person name="Galle R.F."/>
            <person name="George R.A."/>
            <person name="Lewis S.E."/>
            <person name="Richards S."/>
            <person name="Ashburner M."/>
            <person name="Henderson S.N."/>
            <person name="Sutton G.G."/>
            <person name="Wortman J.R."/>
            <person name="Yandell M.D."/>
            <person name="Zhang Q."/>
            <person name="Chen L.X."/>
            <person name="Brandon R.C."/>
            <person name="Rogers Y.-H.C."/>
            <person name="Blazej R.G."/>
            <person name="Champe M."/>
            <person name="Pfeiffer B.D."/>
            <person name="Wan K.H."/>
            <person name="Doyle C."/>
            <person name="Baxter E.G."/>
            <person name="Helt G."/>
            <person name="Nelson C.R."/>
            <person name="Miklos G.L.G."/>
            <person name="Abril J.F."/>
            <person name="Agbayani A."/>
            <person name="An H.-J."/>
            <person name="Andrews-Pfannkoch C."/>
            <person name="Baldwin D."/>
            <person name="Ballew R.M."/>
            <person name="Basu A."/>
            <person name="Baxendale J."/>
            <person name="Bayraktaroglu L."/>
            <person name="Beasley E.M."/>
            <person name="Beeson K.Y."/>
            <person name="Benos P.V."/>
            <person name="Berman B.P."/>
            <person name="Bhandari D."/>
            <person name="Bolshakov S."/>
            <person name="Borkova D."/>
            <person name="Botchan M.R."/>
            <person name="Bouck J."/>
            <person name="Brokstein P."/>
            <person name="Brottier P."/>
            <person name="Burtis K.C."/>
            <person name="Busam D.A."/>
            <person name="Butler H."/>
            <person name="Cadieu E."/>
            <person name="Center A."/>
            <person name="Chandra I."/>
            <person name="Cherry J.M."/>
            <person name="Cawley S."/>
            <person name="Dahlke C."/>
            <person name="Davenport L.B."/>
            <person name="Davies P."/>
            <person name="de Pablos B."/>
            <person name="Delcher A."/>
            <person name="Deng Z."/>
            <person name="Mays A.D."/>
            <person name="Dew I."/>
            <person name="Dietz S.M."/>
            <person name="Dodson K."/>
            <person name="Doup L.E."/>
            <person name="Downes M."/>
            <person name="Dugan-Rocha S."/>
            <person name="Dunkov B.C."/>
            <person name="Dunn P."/>
            <person name="Durbin K.J."/>
            <person name="Evangelista C.C."/>
            <person name="Ferraz C."/>
            <person name="Ferriera S."/>
            <person name="Fleischmann W."/>
            <person name="Fosler C."/>
            <person name="Gabrielian A.E."/>
            <person name="Garg N.S."/>
            <person name="Gelbart W.M."/>
            <person name="Glasser K."/>
            <person name="Glodek A."/>
            <person name="Gong F."/>
            <person name="Gorrell J.H."/>
            <person name="Gu Z."/>
            <person name="Guan P."/>
            <person name="Harris M."/>
            <person name="Harris N.L."/>
            <person name="Harvey D.A."/>
            <person name="Heiman T.J."/>
            <person name="Hernandez J.R."/>
            <person name="Houck J."/>
            <person name="Hostin D."/>
            <person name="Houston K.A."/>
            <person name="Howland T.J."/>
            <person name="Wei M.-H."/>
            <person name="Ibegwam C."/>
            <person name="Jalali M."/>
            <person name="Kalush F."/>
            <person name="Karpen G.H."/>
            <person name="Ke Z."/>
            <person name="Kennison J.A."/>
            <person name="Ketchum K.A."/>
            <person name="Kimmel B.E."/>
            <person name="Kodira C.D."/>
            <person name="Kraft C.L."/>
            <person name="Kravitz S."/>
            <person name="Kulp D."/>
            <person name="Lai Z."/>
            <person name="Lasko P."/>
            <person name="Lei Y."/>
            <person name="Levitsky A.A."/>
            <person name="Li J.H."/>
            <person name="Li Z."/>
            <person name="Liang Y."/>
            <person name="Lin X."/>
            <person name="Liu X."/>
            <person name="Mattei B."/>
            <person name="McIntosh T.C."/>
            <person name="McLeod M.P."/>
            <person name="McPherson D."/>
            <person name="Merkulov G."/>
            <person name="Milshina N.V."/>
            <person name="Mobarry C."/>
            <person name="Morris J."/>
            <person name="Moshrefi A."/>
            <person name="Mount S.M."/>
            <person name="Moy M."/>
            <person name="Murphy B."/>
            <person name="Murphy L."/>
            <person name="Muzny D.M."/>
            <person name="Nelson D.L."/>
            <person name="Nelson D.R."/>
            <person name="Nelson K.A."/>
            <person name="Nixon K."/>
            <person name="Nusskern D.R."/>
            <person name="Pacleb J.M."/>
            <person name="Palazzolo M."/>
            <person name="Pittman G.S."/>
            <person name="Pan S."/>
            <person name="Pollard J."/>
            <person name="Puri V."/>
            <person name="Reese M.G."/>
            <person name="Reinert K."/>
            <person name="Remington K."/>
            <person name="Saunders R.D.C."/>
            <person name="Scheeler F."/>
            <person name="Shen H."/>
            <person name="Shue B.C."/>
            <person name="Siden-Kiamos I."/>
            <person name="Simpson M."/>
            <person name="Skupski M.P."/>
            <person name="Smith T.J."/>
            <person name="Spier E."/>
            <person name="Spradling A.C."/>
            <person name="Stapleton M."/>
            <person name="Strong R."/>
            <person name="Sun E."/>
            <person name="Svirskas R."/>
            <person name="Tector C."/>
            <person name="Turner R."/>
            <person name="Venter E."/>
            <person name="Wang A.H."/>
            <person name="Wang X."/>
            <person name="Wang Z.-Y."/>
            <person name="Wassarman D.A."/>
            <person name="Weinstock G.M."/>
            <person name="Weissenbach J."/>
            <person name="Williams S.M."/>
            <person name="Woodage T."/>
            <person name="Worley K.C."/>
            <person name="Wu D."/>
            <person name="Yang S."/>
            <person name="Yao Q.A."/>
            <person name="Ye J."/>
            <person name="Yeh R.-F."/>
            <person name="Zaveri J.S."/>
            <person name="Zhan M."/>
            <person name="Zhang G."/>
            <person name="Zhao Q."/>
            <person name="Zheng L."/>
            <person name="Zheng X.H."/>
            <person name="Zhong F.N."/>
            <person name="Zhong W."/>
            <person name="Zhou X."/>
            <person name="Zhu S.C."/>
            <person name="Zhu X."/>
            <person name="Smith H.O."/>
            <person name="Gibbs R.A."/>
            <person name="Myers E.W."/>
            <person name="Rubin G.M."/>
            <person name="Venter J.C."/>
        </authorList>
    </citation>
    <scope>NUCLEOTIDE SEQUENCE [LARGE SCALE GENOMIC DNA]</scope>
    <source>
        <strain evidence="4">Berkeley</strain>
    </source>
</reference>
<reference evidence="16 18" key="3">
    <citation type="journal article" date="2002" name="Genome Biol.">
        <title>Annotation of the Drosophila melanogaster euchromatic genome: a systematic review.</title>
        <authorList>
            <person name="Misra S."/>
            <person name="Crosby M.A."/>
            <person name="Mungall C.J."/>
            <person name="Matthews B.B."/>
            <person name="Campbell K.S."/>
            <person name="Hradecky P."/>
            <person name="Huang Y."/>
            <person name="Kaminker J.S."/>
            <person name="Millburn G.H."/>
            <person name="Prochnik S.E."/>
            <person name="Smith C.D."/>
            <person name="Tupy J.L."/>
            <person name="Whitfield E.J."/>
            <person name="Bayraktaroglu L."/>
            <person name="Berman B.P."/>
            <person name="Bettencourt B.R."/>
            <person name="Celniker S.E."/>
            <person name="de Grey A.D.N.J."/>
            <person name="Drysdale R.A."/>
            <person name="Harris N.L."/>
            <person name="Richter J."/>
            <person name="Russo S."/>
            <person name="Schroeder A.J."/>
            <person name="Shu S.Q."/>
            <person name="Stapleton M."/>
            <person name="Yamada C."/>
            <person name="Ashburner M."/>
            <person name="Gelbart W.M."/>
            <person name="Rubin G.M."/>
            <person name="Lewis S.E."/>
        </authorList>
    </citation>
    <scope>GENOME REANNOTATION</scope>
    <scope>ALTERNATIVE SPLICING</scope>
    <source>
        <strain>Berkeley</strain>
    </source>
</reference>
<reference evidence="16 17" key="4">
    <citation type="journal article" date="2002" name="Genome Biol.">
        <title>A Drosophila full-length cDNA resource.</title>
        <authorList>
            <person name="Stapleton M."/>
            <person name="Carlson J.W."/>
            <person name="Brokstein P."/>
            <person name="Yu C."/>
            <person name="Champe M."/>
            <person name="George R.A."/>
            <person name="Guarin H."/>
            <person name="Kronmiller B."/>
            <person name="Pacleb J.M."/>
            <person name="Park S."/>
            <person name="Wan K.H."/>
            <person name="Rubin G.M."/>
            <person name="Celniker S.E."/>
        </authorList>
    </citation>
    <scope>NUCLEOTIDE SEQUENCE [LARGE SCALE MRNA] (ISOFORM D)</scope>
    <source>
        <strain evidence="17">Berkeley</strain>
        <tissue evidence="6">Embryo</tissue>
    </source>
</reference>
<reference evidence="16 19" key="5">
    <citation type="submission" date="2003-03" db="EMBL/GenBank/DDBJ databases">
        <authorList>
            <person name="Stapleton M."/>
            <person name="Brokstein P."/>
            <person name="Hong L."/>
            <person name="Agbayani A."/>
            <person name="Carlson J.W."/>
            <person name="Champe M."/>
            <person name="Chavez C."/>
            <person name="Dorsett V."/>
            <person name="Dresnek D."/>
            <person name="Farfan D."/>
            <person name="Frise E."/>
            <person name="George R.A."/>
            <person name="Gonzalez M."/>
            <person name="Guarin H."/>
            <person name="Kronmiller B."/>
            <person name="Li P.W."/>
            <person name="Liao G."/>
            <person name="Miranda A."/>
            <person name="Mungall C.J."/>
            <person name="Nunoo J."/>
            <person name="Pacleb J.M."/>
            <person name="Paragas V."/>
            <person name="Park S."/>
            <person name="Patel S."/>
            <person name="Phouanenavong S."/>
            <person name="Wan K.H."/>
            <person name="Yu C."/>
            <person name="Lewis S.E."/>
            <person name="Rubin G.M."/>
            <person name="Celniker S.E."/>
        </authorList>
    </citation>
    <scope>NUCLEOTIDE SEQUENCE [LARGE SCALE MRNA] (ISOFORM A)</scope>
    <source>
        <strain evidence="19">Berkeley</strain>
        <tissue>Embryo</tissue>
    </source>
</reference>
<reference evidence="16" key="6">
    <citation type="journal article" date="1994" name="Development">
        <title>Lola encodes a putative transcription factor required for axon growth and guidance in Drosophila.</title>
        <authorList>
            <person name="Giniger E."/>
            <person name="Tietje K."/>
            <person name="Jan L.Y."/>
            <person name="Jan Y.N."/>
        </authorList>
    </citation>
    <scope>FUNCTION</scope>
    <scope>SUBCELLULAR LOCATION</scope>
    <scope>DEVELOPMENTAL STAGE</scope>
</reference>
<reference evidence="16" key="7">
    <citation type="journal article" date="2002" name="Development">
        <title>Lola regulates midline crossing of CNS axons in Drosophila.</title>
        <authorList>
            <person name="Crowner D."/>
            <person name="Madden K."/>
            <person name="Goeke S."/>
            <person name="Giniger E."/>
        </authorList>
    </citation>
    <scope>FUNCTION</scope>
    <scope>MUTAGENESIS OF ALA-107</scope>
</reference>
<reference key="8">
    <citation type="journal article" date="2003" name="Genes Dev.">
        <title>Alternative trans-splicing of constant and variable exons of a Drosophila axon guidance gene, lola.</title>
        <authorList>
            <person name="Horiuchi T."/>
            <person name="Giniger E."/>
            <person name="Aigaki T."/>
        </authorList>
    </citation>
    <scope>TRANS-SPLICING</scope>
</reference>
<reference evidence="16" key="9">
    <citation type="journal article" date="2003" name="J. Biol. Chem.">
        <title>A developmentally regulated splice variant from the complex lola locus encoding multiple different zinc finger domain proteins interacts with the chromosomal kinase JIL-1.</title>
        <authorList>
            <person name="Zhang W."/>
            <person name="Wang Y."/>
            <person name="Long J."/>
            <person name="Girton J."/>
            <person name="Johansen J."/>
            <person name="Johansen K.M."/>
        </authorList>
    </citation>
    <scope>INTERACTION WITH JIL-1</scope>
    <scope>SUBCELLULAR LOCATION</scope>
    <scope>DEVELOPMENTAL STAGE</scope>
</reference>
<reference key="10">
    <citation type="journal article" date="2003" name="Nat. Neurosci.">
        <title>Alternative splicing of lola generates 19 transcription factors controlling axon guidance in Drosophila.</title>
        <authorList>
            <person name="Goeke S."/>
            <person name="Greene E.A."/>
            <person name="Grant P.K."/>
            <person name="Gates M.A."/>
            <person name="Crowner D."/>
            <person name="Aigaki T."/>
            <person name="Giniger E."/>
        </authorList>
    </citation>
    <scope>DEVELOPMENTAL STAGE</scope>
    <scope>TISSUE SPECIFICITY</scope>
    <scope>MUTAGENESIS OF PRO-712</scope>
</reference>
<accession>Q7KQZ4</accession>
<accession>A4UZC4</accession>
<accession>Q0E9C9</accession>
<accession>Q867I7</accession>
<accession>Q867S0</accession>
<accession>Q867S9</accession>
<accession>Q8MKX5</accession>
<accession>Q95TS0</accession>
<dbReference type="EMBL" id="AB107274">
    <property type="protein sequence ID" value="BAC67579.1"/>
    <property type="molecule type" value="mRNA"/>
</dbReference>
<dbReference type="EMBL" id="AB107275">
    <property type="protein sequence ID" value="BAC67580.1"/>
    <property type="molecule type" value="mRNA"/>
</dbReference>
<dbReference type="EMBL" id="AB107277">
    <property type="protein sequence ID" value="BAC67582.1"/>
    <property type="molecule type" value="mRNA"/>
</dbReference>
<dbReference type="EMBL" id="AB107283">
    <property type="protein sequence ID" value="BAC67588.1"/>
    <property type="molecule type" value="mRNA"/>
</dbReference>
<dbReference type="EMBL" id="AB107294">
    <property type="protein sequence ID" value="BAC67599.1"/>
    <property type="molecule type" value="mRNA"/>
</dbReference>
<dbReference type="EMBL" id="AB107295">
    <property type="protein sequence ID" value="BAC67600.1"/>
    <property type="molecule type" value="mRNA"/>
</dbReference>
<dbReference type="EMBL" id="AB107297">
    <property type="protein sequence ID" value="BAC67602.1"/>
    <property type="molecule type" value="mRNA"/>
</dbReference>
<dbReference type="EMBL" id="AB107303">
    <property type="protein sequence ID" value="BAC67608.1"/>
    <property type="molecule type" value="mRNA"/>
</dbReference>
<dbReference type="EMBL" id="AB107314">
    <property type="protein sequence ID" value="BAC67619.1"/>
    <property type="molecule type" value="mRNA"/>
</dbReference>
<dbReference type="EMBL" id="AB107315">
    <property type="protein sequence ID" value="BAC67620.1"/>
    <property type="molecule type" value="mRNA"/>
</dbReference>
<dbReference type="EMBL" id="AB107317">
    <property type="protein sequence ID" value="BAC67622.1"/>
    <property type="molecule type" value="mRNA"/>
</dbReference>
<dbReference type="EMBL" id="AB107323">
    <property type="protein sequence ID" value="BAC67628.1"/>
    <property type="molecule type" value="mRNA"/>
</dbReference>
<dbReference type="EMBL" id="AB107334">
    <property type="protein sequence ID" value="BAC67639.1"/>
    <property type="molecule type" value="mRNA"/>
</dbReference>
<dbReference type="EMBL" id="AB107335">
    <property type="protein sequence ID" value="BAC67640.1"/>
    <property type="molecule type" value="mRNA"/>
</dbReference>
<dbReference type="EMBL" id="AB107337">
    <property type="protein sequence ID" value="BAC67642.1"/>
    <property type="molecule type" value="mRNA"/>
</dbReference>
<dbReference type="EMBL" id="AB107343">
    <property type="protein sequence ID" value="BAC67648.1"/>
    <property type="molecule type" value="mRNA"/>
</dbReference>
<dbReference type="EMBL" id="AE013599">
    <property type="protein sequence ID" value="AAF58775.3"/>
    <property type="molecule type" value="Genomic_DNA"/>
</dbReference>
<dbReference type="EMBL" id="AE013599">
    <property type="protein sequence ID" value="AAF58776.3"/>
    <property type="molecule type" value="Genomic_DNA"/>
</dbReference>
<dbReference type="EMBL" id="AE013599">
    <property type="protein sequence ID" value="AAM68765.1"/>
    <property type="molecule type" value="Genomic_DNA"/>
</dbReference>
<dbReference type="EMBL" id="AE013599">
    <property type="protein sequence ID" value="AAM68766.1"/>
    <property type="molecule type" value="Genomic_DNA"/>
</dbReference>
<dbReference type="EMBL" id="AE013599">
    <property type="protein sequence ID" value="AAO41430.1"/>
    <property type="molecule type" value="Genomic_DNA"/>
</dbReference>
<dbReference type="EMBL" id="AY058586">
    <property type="protein sequence ID" value="AAL13815.1"/>
    <property type="molecule type" value="mRNA"/>
</dbReference>
<dbReference type="EMBL" id="BT004909">
    <property type="protein sequence ID" value="AAO49162.1"/>
    <property type="molecule type" value="mRNA"/>
</dbReference>
<dbReference type="RefSeq" id="NP_724946.1">
    <molecule id="Q7KQZ4-1"/>
    <property type="nucleotide sequence ID" value="NM_170618.5"/>
</dbReference>
<dbReference type="RefSeq" id="NP_724949.2">
    <molecule id="Q7KQZ4-1"/>
    <property type="nucleotide sequence ID" value="NM_170619.3"/>
</dbReference>
<dbReference type="RefSeq" id="NP_724950.1">
    <molecule id="Q7KQZ4-3"/>
    <property type="nucleotide sequence ID" value="NM_170620.4"/>
</dbReference>
<dbReference type="RefSeq" id="NP_724951.1">
    <molecule id="Q7KQZ4-3"/>
    <property type="nucleotide sequence ID" value="NM_170621.4"/>
</dbReference>
<dbReference type="RefSeq" id="NP_724953.2">
    <molecule id="Q7KQZ4-2"/>
    <property type="nucleotide sequence ID" value="NM_170623.6"/>
</dbReference>
<dbReference type="RefSeq" id="NP_788318.1">
    <molecule id="Q7KQZ4-4"/>
    <property type="nucleotide sequence ID" value="NM_176138.5"/>
</dbReference>
<dbReference type="SMR" id="Q7KQZ4"/>
<dbReference type="BioGRID" id="69126">
    <property type="interactions" value="58"/>
</dbReference>
<dbReference type="IntAct" id="Q7KQZ4">
    <property type="interactions" value="6"/>
</dbReference>
<dbReference type="DNASU" id="44548"/>
<dbReference type="EnsemblMetazoa" id="FBtr0089342">
    <molecule id="Q7KQZ4-3"/>
    <property type="protein sequence ID" value="FBpp0088376"/>
    <property type="gene ID" value="FBgn0283521"/>
</dbReference>
<dbReference type="EnsemblMetazoa" id="FBtr0089343">
    <molecule id="Q7KQZ4-1"/>
    <property type="protein sequence ID" value="FBpp0088377"/>
    <property type="gene ID" value="FBgn0283521"/>
</dbReference>
<dbReference type="EnsemblMetazoa" id="FBtr0089344">
    <molecule id="Q7KQZ4-2"/>
    <property type="protein sequence ID" value="FBpp0088378"/>
    <property type="gene ID" value="FBgn0283521"/>
</dbReference>
<dbReference type="EnsemblMetazoa" id="FBtr0089345">
    <molecule id="Q7KQZ4-1"/>
    <property type="protein sequence ID" value="FBpp0088379"/>
    <property type="gene ID" value="FBgn0283521"/>
</dbReference>
<dbReference type="EnsemblMetazoa" id="FBtr0089349">
    <molecule id="Q7KQZ4-3"/>
    <property type="protein sequence ID" value="FBpp0088383"/>
    <property type="gene ID" value="FBgn0283521"/>
</dbReference>
<dbReference type="EnsemblMetazoa" id="FBtr0089352">
    <molecule id="Q7KQZ4-4"/>
    <property type="protein sequence ID" value="FBpp0088386"/>
    <property type="gene ID" value="FBgn0283521"/>
</dbReference>
<dbReference type="GeneID" id="44548"/>
<dbReference type="UCSC" id="CG12052-RE">
    <property type="organism name" value="d. melanogaster"/>
</dbReference>
<dbReference type="AGR" id="FB:FBgn0283521"/>
<dbReference type="CTD" id="44548"/>
<dbReference type="FlyBase" id="FBgn0283521">
    <property type="gene designation" value="lola"/>
</dbReference>
<dbReference type="VEuPathDB" id="VectorBase:FBgn0283521"/>
<dbReference type="GeneTree" id="ENSGT00940000174551"/>
<dbReference type="HOGENOM" id="CLU_010740_4_0_1"/>
<dbReference type="OrthoDB" id="407106at2759"/>
<dbReference type="SignaLink" id="Q7KQZ4"/>
<dbReference type="BioGRID-ORCS" id="44548">
    <property type="hits" value="1 hit in 1 CRISPR screen"/>
</dbReference>
<dbReference type="ChiTaRS" id="lola">
    <property type="organism name" value="fly"/>
</dbReference>
<dbReference type="GenomeRNAi" id="44548"/>
<dbReference type="Proteomes" id="UP000000803">
    <property type="component" value="Chromosome 2R"/>
</dbReference>
<dbReference type="Bgee" id="FBgn0283521">
    <property type="expression patterns" value="Expressed in adult differentiating enterocyte in digestive tract and 312 other cell types or tissues"/>
</dbReference>
<dbReference type="ExpressionAtlas" id="Q7KQZ4">
    <property type="expression patterns" value="baseline and differential"/>
</dbReference>
<dbReference type="GO" id="GO:0005654">
    <property type="term" value="C:nucleoplasm"/>
    <property type="evidence" value="ECO:0007005"/>
    <property type="project" value="FlyBase"/>
</dbReference>
<dbReference type="GO" id="GO:0005634">
    <property type="term" value="C:nucleus"/>
    <property type="evidence" value="ECO:0000314"/>
    <property type="project" value="UniProtKB"/>
</dbReference>
<dbReference type="GO" id="GO:0003677">
    <property type="term" value="F:DNA binding"/>
    <property type="evidence" value="ECO:0007669"/>
    <property type="project" value="UniProtKB-KW"/>
</dbReference>
<dbReference type="GO" id="GO:0003700">
    <property type="term" value="F:DNA-binding transcription factor activity"/>
    <property type="evidence" value="ECO:0000250"/>
    <property type="project" value="FlyBase"/>
</dbReference>
<dbReference type="GO" id="GO:0008270">
    <property type="term" value="F:zinc ion binding"/>
    <property type="evidence" value="ECO:0007669"/>
    <property type="project" value="UniProtKB-KW"/>
</dbReference>
<dbReference type="GO" id="GO:0007411">
    <property type="term" value="P:axon guidance"/>
    <property type="evidence" value="ECO:0000315"/>
    <property type="project" value="UniProtKB"/>
</dbReference>
<dbReference type="GO" id="GO:0016199">
    <property type="term" value="P:axon midline choice point recognition"/>
    <property type="evidence" value="ECO:0000315"/>
    <property type="project" value="UniProtKB"/>
</dbReference>
<dbReference type="GO" id="GO:0007409">
    <property type="term" value="P:axonogenesis"/>
    <property type="evidence" value="ECO:0000315"/>
    <property type="project" value="UniProtKB"/>
</dbReference>
<dbReference type="GO" id="GO:0048813">
    <property type="term" value="P:dendrite morphogenesis"/>
    <property type="evidence" value="ECO:0000315"/>
    <property type="project" value="FlyBase"/>
</dbReference>
<dbReference type="GO" id="GO:0008406">
    <property type="term" value="P:gonad development"/>
    <property type="evidence" value="ECO:0000315"/>
    <property type="project" value="FlyBase"/>
</dbReference>
<dbReference type="GO" id="GO:0035167">
    <property type="term" value="P:larval lymph gland hemopoiesis"/>
    <property type="evidence" value="ECO:0000315"/>
    <property type="project" value="FlyBase"/>
</dbReference>
<dbReference type="GO" id="GO:0007526">
    <property type="term" value="P:larval somatic muscle development"/>
    <property type="evidence" value="ECO:0000315"/>
    <property type="project" value="FlyBase"/>
</dbReference>
<dbReference type="GO" id="GO:0045476">
    <property type="term" value="P:nurse cell apoptotic process"/>
    <property type="evidence" value="ECO:0000315"/>
    <property type="project" value="FlyBase"/>
</dbReference>
<dbReference type="GO" id="GO:0045893">
    <property type="term" value="P:positive regulation of DNA-templated transcription"/>
    <property type="evidence" value="ECO:0000250"/>
    <property type="project" value="UniProtKB"/>
</dbReference>
<dbReference type="GO" id="GO:0007464">
    <property type="term" value="P:R3/R4 cell fate commitment"/>
    <property type="evidence" value="ECO:0000315"/>
    <property type="project" value="FlyBase"/>
</dbReference>
<dbReference type="GO" id="GO:0045467">
    <property type="term" value="P:R7 cell development"/>
    <property type="evidence" value="ECO:0000315"/>
    <property type="project" value="FlyBase"/>
</dbReference>
<dbReference type="GO" id="GO:0006355">
    <property type="term" value="P:regulation of DNA-templated transcription"/>
    <property type="evidence" value="ECO:0000315"/>
    <property type="project" value="FlyBase"/>
</dbReference>
<dbReference type="GO" id="GO:0006357">
    <property type="term" value="P:regulation of transcription by RNA polymerase II"/>
    <property type="evidence" value="ECO:0000318"/>
    <property type="project" value="GO_Central"/>
</dbReference>
<dbReference type="CDD" id="cd18315">
    <property type="entry name" value="BTB_POZ_BAB-like"/>
    <property type="match status" value="1"/>
</dbReference>
<dbReference type="FunFam" id="3.30.710.10:FF:000091">
    <property type="entry name" value="Lola, isoform F"/>
    <property type="match status" value="1"/>
</dbReference>
<dbReference type="Gene3D" id="3.30.160.60">
    <property type="entry name" value="Classic Zinc Finger"/>
    <property type="match status" value="1"/>
</dbReference>
<dbReference type="Gene3D" id="3.30.710.10">
    <property type="entry name" value="Potassium Channel Kv1.1, Chain A"/>
    <property type="match status" value="1"/>
</dbReference>
<dbReference type="InterPro" id="IPR000210">
    <property type="entry name" value="BTB/POZ_dom"/>
</dbReference>
<dbReference type="InterPro" id="IPR051095">
    <property type="entry name" value="Dros_DevTransReg"/>
</dbReference>
<dbReference type="InterPro" id="IPR011333">
    <property type="entry name" value="SKP1/BTB/POZ_sf"/>
</dbReference>
<dbReference type="InterPro" id="IPR036236">
    <property type="entry name" value="Znf_C2H2_sf"/>
</dbReference>
<dbReference type="InterPro" id="IPR013087">
    <property type="entry name" value="Znf_C2H2_type"/>
</dbReference>
<dbReference type="PANTHER" id="PTHR23110">
    <property type="entry name" value="BTB DOMAIN TRANSCRIPTION FACTOR"/>
    <property type="match status" value="1"/>
</dbReference>
<dbReference type="PANTHER" id="PTHR23110:SF111">
    <property type="entry name" value="LONGITUDINALS LACKING PROTEIN, ISOFORMS F_I_K_T"/>
    <property type="match status" value="1"/>
</dbReference>
<dbReference type="Pfam" id="PF00651">
    <property type="entry name" value="BTB"/>
    <property type="match status" value="1"/>
</dbReference>
<dbReference type="SMART" id="SM00225">
    <property type="entry name" value="BTB"/>
    <property type="match status" value="1"/>
</dbReference>
<dbReference type="SMART" id="SM00355">
    <property type="entry name" value="ZnF_C2H2"/>
    <property type="match status" value="2"/>
</dbReference>
<dbReference type="SUPFAM" id="SSF57667">
    <property type="entry name" value="beta-beta-alpha zinc fingers"/>
    <property type="match status" value="1"/>
</dbReference>
<dbReference type="SUPFAM" id="SSF54695">
    <property type="entry name" value="POZ domain"/>
    <property type="match status" value="1"/>
</dbReference>
<dbReference type="PROSITE" id="PS50097">
    <property type="entry name" value="BTB"/>
    <property type="match status" value="1"/>
</dbReference>
<dbReference type="PROSITE" id="PS50157">
    <property type="entry name" value="ZINC_FINGER_C2H2_2"/>
    <property type="match status" value="1"/>
</dbReference>
<protein>
    <recommendedName>
        <fullName>Longitudinals lacking protein, isoforms A/B/D/L</fullName>
    </recommendedName>
</protein>
<keyword id="KW-0025">Alternative splicing</keyword>
<keyword id="KW-0217">Developmental protein</keyword>
<keyword id="KW-0221">Differentiation</keyword>
<keyword id="KW-0238">DNA-binding</keyword>
<keyword id="KW-0479">Metal-binding</keyword>
<keyword id="KW-0524">Neurogenesis</keyword>
<keyword id="KW-0539">Nucleus</keyword>
<keyword id="KW-1185">Reference proteome</keyword>
<keyword id="KW-0677">Repeat</keyword>
<keyword id="KW-0804">Transcription</keyword>
<keyword id="KW-0805">Transcription regulation</keyword>
<keyword id="KW-0862">Zinc</keyword>
<keyword id="KW-0863">Zinc-finger</keyword>
<sequence>MDDDQQFCLRWNNHQSTLISVFDTLLENETLVDCTLAAEGKFLKAHKVVLSACSPYFATLLQEQYDKHPIFILKDVKYQELRAMMDYMYRGEVNISQDQLAALLKAAESLQIKGLSDNRTGGGVAPKPESSGHHRGGKLSGAYTLEQTKRARLATGGAMDTSGDVSGSREGSSSPSRRRRKVRRRSMENDAHDNSNSSVLQAAASNQSILQQTGAGLAVSALVTTQLSSGPAAGTSSQASSTQQQQPLTSTNVTKKTESAKLTSSTAAPASGASASAAVQQAHLHQQQAQTTSDAINTENVQAQSQGGAQGVQGDDEDIDEGSAVGGPNSATGPNPASASASAVHAGVVVKQLASVVDKSSSNHKHKIKDNSVSSVGSEMVIEPKAEYDDDAHDENVEDLTLDEEDMTMEELDQTAGTSQGGEGSSQTYATWQHDRSQDELGLMAQDAQQRDPQDLSITRIAGLTWNEWNARLAMPLVTLREGVQPLVFPTDLSVDKQQGAAGLTAKDVNVSGRKTPTDGGGCKSEPRAASTPARTHSSSNHSSNGNGSGKPTKTSSGGKLNHLTEEEATALMLKAVAEKQAAAAAGTELSFGEDQASSGNGNSSDYPATLSGAVTFADVGGPAGLCHINILNSISAMNNLISGSTAAGVGITTGSGQSPSNSGHNNSAGGGSSVLGGADNGAGHPCPVCGRVYKLKSSLRNHQKWECGKEPQFQCPFCVYRAKQKMHIGRHMERMHKEKFKLEDVKNFAGSSGLDGDSSGATATAASVVAAAAALVSGVELHPHFS</sequence>